<comment type="function">
    <text evidence="1">Converts 2-succinyl-6-hydroxy-2,4-cyclohexadiene-1-carboxylate (SHCHC) to 2-succinylbenzoate (OSB).</text>
</comment>
<comment type="catalytic activity">
    <reaction evidence="1">
        <text>(1R,6R)-6-hydroxy-2-succinyl-cyclohexa-2,4-diene-1-carboxylate = 2-succinylbenzoate + H2O</text>
        <dbReference type="Rhea" id="RHEA:10196"/>
        <dbReference type="ChEBI" id="CHEBI:15377"/>
        <dbReference type="ChEBI" id="CHEBI:18325"/>
        <dbReference type="ChEBI" id="CHEBI:58689"/>
        <dbReference type="EC" id="4.2.1.113"/>
    </reaction>
</comment>
<comment type="cofactor">
    <cofactor evidence="1">
        <name>a divalent metal cation</name>
        <dbReference type="ChEBI" id="CHEBI:60240"/>
    </cofactor>
</comment>
<comment type="pathway">
    <text evidence="1">Quinol/quinone metabolism; 1,4-dihydroxy-2-naphthoate biosynthesis; 1,4-dihydroxy-2-naphthoate from chorismate: step 4/7.</text>
</comment>
<comment type="pathway">
    <text evidence="1">Quinol/quinone metabolism; menaquinone biosynthesis.</text>
</comment>
<comment type="similarity">
    <text evidence="1">Belongs to the mandelate racemase/muconate lactonizing enzyme family. MenC type 1 subfamily.</text>
</comment>
<gene>
    <name evidence="1" type="primary">menC</name>
    <name type="ordered locus">plu3070</name>
</gene>
<sequence length="323" mass="35642">MRTATLYRFRLPMEAGVILRYQRLKTRDGFLVHLQENGQQGWGEIAPLPEFSKETVEQAGEAAVAWLRLWHLGAEPDESELPSVAFGISCALAELQGNLPEEADYRKAPLCNGDPDELIVRLNNMSGQKVAKVKIGLYEAVRDGMVVNVLLEAVPDLSLRLDANRSWSRAKADSFAKYVNPDYRNRIAFLEEPCQTSQQSLAFARDTGIAIAWDESVRDEGFNVEAQAGVTAIVIKPTLTGSLARCCQLISAAHNVGLEAVISSSIETSFGLTQLARIAHWLTPATIPGLDTLELIQSQLVRRWPGSTMPVTRLDELAIAWRS</sequence>
<protein>
    <recommendedName>
        <fullName evidence="1">o-succinylbenzoate synthase</fullName>
        <shortName evidence="1">OSB synthase</shortName>
        <shortName evidence="1">OSBS</shortName>
        <ecNumber evidence="1">4.2.1.113</ecNumber>
    </recommendedName>
    <alternativeName>
        <fullName evidence="1">4-(2'-carboxyphenyl)-4-oxybutyric acid synthase</fullName>
    </alternativeName>
    <alternativeName>
        <fullName evidence="1">o-succinylbenzoic acid synthase</fullName>
    </alternativeName>
</protein>
<proteinExistence type="inferred from homology"/>
<keyword id="KW-0456">Lyase</keyword>
<keyword id="KW-0460">Magnesium</keyword>
<keyword id="KW-0474">Menaquinone biosynthesis</keyword>
<keyword id="KW-0479">Metal-binding</keyword>
<keyword id="KW-1185">Reference proteome</keyword>
<name>MENC_PHOLL</name>
<accession>Q7N2K6</accession>
<feature type="chain" id="PRO_1000013808" description="o-succinylbenzoate synthase">
    <location>
        <begin position="1"/>
        <end position="323"/>
    </location>
</feature>
<feature type="active site" description="Proton donor" evidence="1">
    <location>
        <position position="134"/>
    </location>
</feature>
<feature type="active site" description="Proton acceptor" evidence="1">
    <location>
        <position position="236"/>
    </location>
</feature>
<feature type="binding site" evidence="1">
    <location>
        <position position="162"/>
    </location>
    <ligand>
        <name>Mg(2+)</name>
        <dbReference type="ChEBI" id="CHEBI:18420"/>
    </ligand>
</feature>
<feature type="binding site" evidence="1">
    <location>
        <position position="191"/>
    </location>
    <ligand>
        <name>Mg(2+)</name>
        <dbReference type="ChEBI" id="CHEBI:18420"/>
    </ligand>
</feature>
<feature type="binding site" evidence="1">
    <location>
        <position position="214"/>
    </location>
    <ligand>
        <name>Mg(2+)</name>
        <dbReference type="ChEBI" id="CHEBI:18420"/>
    </ligand>
</feature>
<reference key="1">
    <citation type="journal article" date="2003" name="Nat. Biotechnol.">
        <title>The genome sequence of the entomopathogenic bacterium Photorhabdus luminescens.</title>
        <authorList>
            <person name="Duchaud E."/>
            <person name="Rusniok C."/>
            <person name="Frangeul L."/>
            <person name="Buchrieser C."/>
            <person name="Givaudan A."/>
            <person name="Taourit S."/>
            <person name="Bocs S."/>
            <person name="Boursaux-Eude C."/>
            <person name="Chandler M."/>
            <person name="Charles J.-F."/>
            <person name="Dassa E."/>
            <person name="Derose R."/>
            <person name="Derzelle S."/>
            <person name="Freyssinet G."/>
            <person name="Gaudriault S."/>
            <person name="Medigue C."/>
            <person name="Lanois A."/>
            <person name="Powell K."/>
            <person name="Siguier P."/>
            <person name="Vincent R."/>
            <person name="Wingate V."/>
            <person name="Zouine M."/>
            <person name="Glaser P."/>
            <person name="Boemare N."/>
            <person name="Danchin A."/>
            <person name="Kunst F."/>
        </authorList>
    </citation>
    <scope>NUCLEOTIDE SEQUENCE [LARGE SCALE GENOMIC DNA]</scope>
    <source>
        <strain>DSM 15139 / CIP 105565 / TT01</strain>
    </source>
</reference>
<evidence type="ECO:0000255" key="1">
    <source>
        <dbReference type="HAMAP-Rule" id="MF_00470"/>
    </source>
</evidence>
<dbReference type="EC" id="4.2.1.113" evidence="1"/>
<dbReference type="EMBL" id="BX571869">
    <property type="protein sequence ID" value="CAE15444.1"/>
    <property type="molecule type" value="Genomic_DNA"/>
</dbReference>
<dbReference type="RefSeq" id="WP_011147287.1">
    <property type="nucleotide sequence ID" value="NC_005126.1"/>
</dbReference>
<dbReference type="SMR" id="Q7N2K6"/>
<dbReference type="STRING" id="243265.plu3070"/>
<dbReference type="GeneID" id="48849331"/>
<dbReference type="KEGG" id="plu:plu3070"/>
<dbReference type="eggNOG" id="COG1441">
    <property type="taxonomic scope" value="Bacteria"/>
</dbReference>
<dbReference type="HOGENOM" id="CLU_030273_0_1_6"/>
<dbReference type="OrthoDB" id="3725747at2"/>
<dbReference type="UniPathway" id="UPA00079"/>
<dbReference type="UniPathway" id="UPA01057">
    <property type="reaction ID" value="UER00165"/>
</dbReference>
<dbReference type="Proteomes" id="UP000002514">
    <property type="component" value="Chromosome"/>
</dbReference>
<dbReference type="GO" id="GO:0000287">
    <property type="term" value="F:magnesium ion binding"/>
    <property type="evidence" value="ECO:0007669"/>
    <property type="project" value="UniProtKB-UniRule"/>
</dbReference>
<dbReference type="GO" id="GO:0043748">
    <property type="term" value="F:O-succinylbenzoate synthase activity"/>
    <property type="evidence" value="ECO:0007669"/>
    <property type="project" value="UniProtKB-EC"/>
</dbReference>
<dbReference type="GO" id="GO:0009234">
    <property type="term" value="P:menaquinone biosynthetic process"/>
    <property type="evidence" value="ECO:0007669"/>
    <property type="project" value="UniProtKB-UniRule"/>
</dbReference>
<dbReference type="CDD" id="cd03320">
    <property type="entry name" value="OSBS"/>
    <property type="match status" value="1"/>
</dbReference>
<dbReference type="Gene3D" id="3.20.20.120">
    <property type="entry name" value="Enolase-like C-terminal domain"/>
    <property type="match status" value="1"/>
</dbReference>
<dbReference type="Gene3D" id="3.30.390.10">
    <property type="entry name" value="Enolase-like, N-terminal domain"/>
    <property type="match status" value="1"/>
</dbReference>
<dbReference type="HAMAP" id="MF_00470">
    <property type="entry name" value="MenC_1"/>
    <property type="match status" value="1"/>
</dbReference>
<dbReference type="InterPro" id="IPR036849">
    <property type="entry name" value="Enolase-like_C_sf"/>
</dbReference>
<dbReference type="InterPro" id="IPR029017">
    <property type="entry name" value="Enolase-like_N"/>
</dbReference>
<dbReference type="InterPro" id="IPR029065">
    <property type="entry name" value="Enolase_C-like"/>
</dbReference>
<dbReference type="InterPro" id="IPR013342">
    <property type="entry name" value="Mandelate_racemase_C"/>
</dbReference>
<dbReference type="InterPro" id="IPR010196">
    <property type="entry name" value="OSB_synthase_MenC1"/>
</dbReference>
<dbReference type="InterPro" id="IPR041338">
    <property type="entry name" value="OSBS_N"/>
</dbReference>
<dbReference type="NCBIfam" id="TIGR01927">
    <property type="entry name" value="menC_gam_Gplu"/>
    <property type="match status" value="1"/>
</dbReference>
<dbReference type="NCBIfam" id="NF003473">
    <property type="entry name" value="PRK05105.1"/>
    <property type="match status" value="1"/>
</dbReference>
<dbReference type="PANTHER" id="PTHR48073:SF2">
    <property type="entry name" value="O-SUCCINYLBENZOATE SYNTHASE"/>
    <property type="match status" value="1"/>
</dbReference>
<dbReference type="PANTHER" id="PTHR48073">
    <property type="entry name" value="O-SUCCINYLBENZOATE SYNTHASE-RELATED"/>
    <property type="match status" value="1"/>
</dbReference>
<dbReference type="Pfam" id="PF21508">
    <property type="entry name" value="MenC_N"/>
    <property type="match status" value="1"/>
</dbReference>
<dbReference type="Pfam" id="PF13378">
    <property type="entry name" value="MR_MLE_C"/>
    <property type="match status" value="1"/>
</dbReference>
<dbReference type="SFLD" id="SFLDG00180">
    <property type="entry name" value="muconate_cycloisomerase"/>
    <property type="match status" value="1"/>
</dbReference>
<dbReference type="SFLD" id="SFLDF00009">
    <property type="entry name" value="o-succinylbenzoate_synthase"/>
    <property type="match status" value="1"/>
</dbReference>
<dbReference type="SMART" id="SM00922">
    <property type="entry name" value="MR_MLE"/>
    <property type="match status" value="1"/>
</dbReference>
<dbReference type="SUPFAM" id="SSF51604">
    <property type="entry name" value="Enolase C-terminal domain-like"/>
    <property type="match status" value="1"/>
</dbReference>
<dbReference type="SUPFAM" id="SSF54826">
    <property type="entry name" value="Enolase N-terminal domain-like"/>
    <property type="match status" value="1"/>
</dbReference>
<organism>
    <name type="scientific">Photorhabdus laumondii subsp. laumondii (strain DSM 15139 / CIP 105565 / TT01)</name>
    <name type="common">Photorhabdus luminescens subsp. laumondii</name>
    <dbReference type="NCBI Taxonomy" id="243265"/>
    <lineage>
        <taxon>Bacteria</taxon>
        <taxon>Pseudomonadati</taxon>
        <taxon>Pseudomonadota</taxon>
        <taxon>Gammaproteobacteria</taxon>
        <taxon>Enterobacterales</taxon>
        <taxon>Morganellaceae</taxon>
        <taxon>Photorhabdus</taxon>
    </lineage>
</organism>